<organism>
    <name type="scientific">Mesorhizobium japonicum (strain LMG 29417 / CECT 9101 / MAFF 303099)</name>
    <name type="common">Mesorhizobium loti (strain MAFF 303099)</name>
    <dbReference type="NCBI Taxonomy" id="266835"/>
    <lineage>
        <taxon>Bacteria</taxon>
        <taxon>Pseudomonadati</taxon>
        <taxon>Pseudomonadota</taxon>
        <taxon>Alphaproteobacteria</taxon>
        <taxon>Hyphomicrobiales</taxon>
        <taxon>Phyllobacteriaceae</taxon>
        <taxon>Mesorhizobium</taxon>
    </lineage>
</organism>
<dbReference type="EMBL" id="BA000012">
    <property type="protein sequence ID" value="BAB51479.1"/>
    <property type="molecule type" value="Genomic_DNA"/>
</dbReference>
<dbReference type="RefSeq" id="WP_010912820.1">
    <property type="nucleotide sequence ID" value="NC_002678.2"/>
</dbReference>
<dbReference type="SMR" id="Q98CZ2"/>
<dbReference type="KEGG" id="mlo:mll4937"/>
<dbReference type="PATRIC" id="fig|266835.9.peg.3899"/>
<dbReference type="eggNOG" id="COG2371">
    <property type="taxonomic scope" value="Bacteria"/>
</dbReference>
<dbReference type="HOGENOM" id="CLU_093757_1_0_5"/>
<dbReference type="Proteomes" id="UP000000552">
    <property type="component" value="Chromosome"/>
</dbReference>
<dbReference type="GO" id="GO:0005737">
    <property type="term" value="C:cytoplasm"/>
    <property type="evidence" value="ECO:0007669"/>
    <property type="project" value="UniProtKB-SubCell"/>
</dbReference>
<dbReference type="GO" id="GO:0016151">
    <property type="term" value="F:nickel cation binding"/>
    <property type="evidence" value="ECO:0007669"/>
    <property type="project" value="UniProtKB-UniRule"/>
</dbReference>
<dbReference type="GO" id="GO:0051082">
    <property type="term" value="F:unfolded protein binding"/>
    <property type="evidence" value="ECO:0007669"/>
    <property type="project" value="UniProtKB-UniRule"/>
</dbReference>
<dbReference type="GO" id="GO:0006457">
    <property type="term" value="P:protein folding"/>
    <property type="evidence" value="ECO:0007669"/>
    <property type="project" value="InterPro"/>
</dbReference>
<dbReference type="GO" id="GO:0065003">
    <property type="term" value="P:protein-containing complex assembly"/>
    <property type="evidence" value="ECO:0007669"/>
    <property type="project" value="InterPro"/>
</dbReference>
<dbReference type="GO" id="GO:0019627">
    <property type="term" value="P:urea metabolic process"/>
    <property type="evidence" value="ECO:0007669"/>
    <property type="project" value="InterPro"/>
</dbReference>
<dbReference type="CDD" id="cd00571">
    <property type="entry name" value="UreE"/>
    <property type="match status" value="1"/>
</dbReference>
<dbReference type="Gene3D" id="2.60.260.20">
    <property type="entry name" value="Urease metallochaperone UreE, N-terminal domain"/>
    <property type="match status" value="1"/>
</dbReference>
<dbReference type="Gene3D" id="3.30.70.790">
    <property type="entry name" value="UreE, C-terminal domain"/>
    <property type="match status" value="1"/>
</dbReference>
<dbReference type="HAMAP" id="MF_00822">
    <property type="entry name" value="UreE"/>
    <property type="match status" value="1"/>
</dbReference>
<dbReference type="InterPro" id="IPR012406">
    <property type="entry name" value="UreE"/>
</dbReference>
<dbReference type="InterPro" id="IPR007864">
    <property type="entry name" value="UreE_C_dom"/>
</dbReference>
<dbReference type="InterPro" id="IPR004029">
    <property type="entry name" value="UreE_N"/>
</dbReference>
<dbReference type="InterPro" id="IPR036118">
    <property type="entry name" value="UreE_N_sf"/>
</dbReference>
<dbReference type="NCBIfam" id="NF009760">
    <property type="entry name" value="PRK13261.2-6"/>
    <property type="match status" value="1"/>
</dbReference>
<dbReference type="Pfam" id="PF05194">
    <property type="entry name" value="UreE_C"/>
    <property type="match status" value="1"/>
</dbReference>
<dbReference type="Pfam" id="PF02814">
    <property type="entry name" value="UreE_N"/>
    <property type="match status" value="1"/>
</dbReference>
<dbReference type="SMART" id="SM00988">
    <property type="entry name" value="UreE_N"/>
    <property type="match status" value="1"/>
</dbReference>
<dbReference type="SUPFAM" id="SSF69737">
    <property type="entry name" value="Urease metallochaperone UreE, C-terminal domain"/>
    <property type="match status" value="1"/>
</dbReference>
<dbReference type="SUPFAM" id="SSF69287">
    <property type="entry name" value="Urease metallochaperone UreE, N-terminal domain"/>
    <property type="match status" value="1"/>
</dbReference>
<sequence length="196" mass="21471">MKLNLNTDFTKFPRAVSVLAAGEAGAAPAFAKAVLAHDERHLRRRAVELTDGSKVLVDLPEPVALNDGDRLVLEDGRHVEIIAAPEEVYDIRARDGVHLTELAWHIGNRHLAAGIEADRIVILRDHVIKAMLEGLGATVREVSEPFKPVRGAYSGGHDHGHAHAHSHAEAHSHAHGESHSHSHSHSHDDHHHHDHD</sequence>
<gene>
    <name evidence="1" type="primary">ureE</name>
    <name type="ordered locus">mll4937</name>
</gene>
<evidence type="ECO:0000255" key="1">
    <source>
        <dbReference type="HAMAP-Rule" id="MF_00822"/>
    </source>
</evidence>
<evidence type="ECO:0000256" key="2">
    <source>
        <dbReference type="SAM" id="MobiDB-lite"/>
    </source>
</evidence>
<accession>Q98CZ2</accession>
<name>UREE_RHILO</name>
<keyword id="KW-0143">Chaperone</keyword>
<keyword id="KW-0963">Cytoplasm</keyword>
<keyword id="KW-0533">Nickel</keyword>
<keyword id="KW-0996">Nickel insertion</keyword>
<proteinExistence type="inferred from homology"/>
<comment type="function">
    <text evidence="1">Involved in urease metallocenter assembly. Binds nickel. Probably functions as a nickel donor during metallocenter assembly.</text>
</comment>
<comment type="subcellular location">
    <subcellularLocation>
        <location evidence="1">Cytoplasm</location>
    </subcellularLocation>
</comment>
<comment type="similarity">
    <text evidence="1">Belongs to the UreE family.</text>
</comment>
<reference key="1">
    <citation type="journal article" date="2000" name="DNA Res.">
        <title>Complete genome structure of the nitrogen-fixing symbiotic bacterium Mesorhizobium loti.</title>
        <authorList>
            <person name="Kaneko T."/>
            <person name="Nakamura Y."/>
            <person name="Sato S."/>
            <person name="Asamizu E."/>
            <person name="Kato T."/>
            <person name="Sasamoto S."/>
            <person name="Watanabe A."/>
            <person name="Idesawa K."/>
            <person name="Ishikawa A."/>
            <person name="Kawashima K."/>
            <person name="Kimura T."/>
            <person name="Kishida Y."/>
            <person name="Kiyokawa C."/>
            <person name="Kohara M."/>
            <person name="Matsumoto M."/>
            <person name="Matsuno A."/>
            <person name="Mochizuki Y."/>
            <person name="Nakayama S."/>
            <person name="Nakazaki N."/>
            <person name="Shimpo S."/>
            <person name="Sugimoto M."/>
            <person name="Takeuchi C."/>
            <person name="Yamada M."/>
            <person name="Tabata S."/>
        </authorList>
    </citation>
    <scope>NUCLEOTIDE SEQUENCE [LARGE SCALE GENOMIC DNA]</scope>
    <source>
        <strain>LMG 29417 / CECT 9101 / MAFF 303099</strain>
    </source>
</reference>
<feature type="chain" id="PRO_0000223432" description="Urease accessory protein UreE">
    <location>
        <begin position="1"/>
        <end position="196"/>
    </location>
</feature>
<feature type="region of interest" description="Disordered" evidence="2">
    <location>
        <begin position="150"/>
        <end position="196"/>
    </location>
</feature>
<feature type="compositionally biased region" description="Basic and acidic residues" evidence="2">
    <location>
        <begin position="156"/>
        <end position="196"/>
    </location>
</feature>
<protein>
    <recommendedName>
        <fullName evidence="1">Urease accessory protein UreE</fullName>
    </recommendedName>
</protein>